<reference key="1">
    <citation type="submission" date="2007-05" db="EMBL/GenBank/DDBJ databases">
        <title>Complete sequence of Geobacter uraniireducens Rf4.</title>
        <authorList>
            <consortium name="US DOE Joint Genome Institute"/>
            <person name="Copeland A."/>
            <person name="Lucas S."/>
            <person name="Lapidus A."/>
            <person name="Barry K."/>
            <person name="Detter J.C."/>
            <person name="Glavina del Rio T."/>
            <person name="Hammon N."/>
            <person name="Israni S."/>
            <person name="Dalin E."/>
            <person name="Tice H."/>
            <person name="Pitluck S."/>
            <person name="Chertkov O."/>
            <person name="Brettin T."/>
            <person name="Bruce D."/>
            <person name="Han C."/>
            <person name="Schmutz J."/>
            <person name="Larimer F."/>
            <person name="Land M."/>
            <person name="Hauser L."/>
            <person name="Kyrpides N."/>
            <person name="Mikhailova N."/>
            <person name="Shelobolina E."/>
            <person name="Aklujkar M."/>
            <person name="Lovley D."/>
            <person name="Richardson P."/>
        </authorList>
    </citation>
    <scope>NUCLEOTIDE SEQUENCE [LARGE SCALE GENOMIC DNA]</scope>
    <source>
        <strain>ATCC BAA-1134 / JCM 13001 / Rf4</strain>
    </source>
</reference>
<feature type="chain" id="PRO_1000076436" description="N-(5'-phosphoribosyl)anthranilate isomerase">
    <location>
        <begin position="1"/>
        <end position="203"/>
    </location>
</feature>
<protein>
    <recommendedName>
        <fullName evidence="1">N-(5'-phosphoribosyl)anthranilate isomerase</fullName>
        <shortName evidence="1">PRAI</shortName>
        <ecNumber evidence="1">5.3.1.24</ecNumber>
    </recommendedName>
</protein>
<name>TRPF_GEOUR</name>
<keyword id="KW-0028">Amino-acid biosynthesis</keyword>
<keyword id="KW-0057">Aromatic amino acid biosynthesis</keyword>
<keyword id="KW-0413">Isomerase</keyword>
<keyword id="KW-1185">Reference proteome</keyword>
<keyword id="KW-0822">Tryptophan biosynthesis</keyword>
<comment type="catalytic activity">
    <reaction evidence="1">
        <text>N-(5-phospho-beta-D-ribosyl)anthranilate = 1-(2-carboxyphenylamino)-1-deoxy-D-ribulose 5-phosphate</text>
        <dbReference type="Rhea" id="RHEA:21540"/>
        <dbReference type="ChEBI" id="CHEBI:18277"/>
        <dbReference type="ChEBI" id="CHEBI:58613"/>
        <dbReference type="EC" id="5.3.1.24"/>
    </reaction>
</comment>
<comment type="pathway">
    <text evidence="1">Amino-acid biosynthesis; L-tryptophan biosynthesis; L-tryptophan from chorismate: step 3/5.</text>
</comment>
<comment type="similarity">
    <text evidence="1">Belongs to the TrpF family.</text>
</comment>
<gene>
    <name evidence="1" type="primary">trpF</name>
    <name type="ordered locus">Gura_1736</name>
</gene>
<dbReference type="EC" id="5.3.1.24" evidence="1"/>
<dbReference type="EMBL" id="CP000698">
    <property type="protein sequence ID" value="ABQ25930.1"/>
    <property type="molecule type" value="Genomic_DNA"/>
</dbReference>
<dbReference type="RefSeq" id="WP_011938636.1">
    <property type="nucleotide sequence ID" value="NC_009483.1"/>
</dbReference>
<dbReference type="SMR" id="A5GES5"/>
<dbReference type="STRING" id="351605.Gura_1736"/>
<dbReference type="KEGG" id="gur:Gura_1736"/>
<dbReference type="HOGENOM" id="CLU_076364_2_0_7"/>
<dbReference type="OrthoDB" id="9796196at2"/>
<dbReference type="UniPathway" id="UPA00035">
    <property type="reaction ID" value="UER00042"/>
</dbReference>
<dbReference type="Proteomes" id="UP000006695">
    <property type="component" value="Chromosome"/>
</dbReference>
<dbReference type="GO" id="GO:0004640">
    <property type="term" value="F:phosphoribosylanthranilate isomerase activity"/>
    <property type="evidence" value="ECO:0007669"/>
    <property type="project" value="UniProtKB-UniRule"/>
</dbReference>
<dbReference type="GO" id="GO:0000162">
    <property type="term" value="P:L-tryptophan biosynthetic process"/>
    <property type="evidence" value="ECO:0007669"/>
    <property type="project" value="UniProtKB-UniRule"/>
</dbReference>
<dbReference type="CDD" id="cd00405">
    <property type="entry name" value="PRAI"/>
    <property type="match status" value="1"/>
</dbReference>
<dbReference type="FunFam" id="3.20.20.70:FF:000075">
    <property type="entry name" value="Tryptophan biosynthesis protein TRP1"/>
    <property type="match status" value="1"/>
</dbReference>
<dbReference type="Gene3D" id="3.20.20.70">
    <property type="entry name" value="Aldolase class I"/>
    <property type="match status" value="1"/>
</dbReference>
<dbReference type="HAMAP" id="MF_00135">
    <property type="entry name" value="PRAI"/>
    <property type="match status" value="1"/>
</dbReference>
<dbReference type="InterPro" id="IPR013785">
    <property type="entry name" value="Aldolase_TIM"/>
</dbReference>
<dbReference type="InterPro" id="IPR001240">
    <property type="entry name" value="PRAI_dom"/>
</dbReference>
<dbReference type="InterPro" id="IPR011060">
    <property type="entry name" value="RibuloseP-bd_barrel"/>
</dbReference>
<dbReference type="InterPro" id="IPR044643">
    <property type="entry name" value="TrpF_fam"/>
</dbReference>
<dbReference type="NCBIfam" id="NF002298">
    <property type="entry name" value="PRK01222.1-4"/>
    <property type="match status" value="1"/>
</dbReference>
<dbReference type="PANTHER" id="PTHR42894">
    <property type="entry name" value="N-(5'-PHOSPHORIBOSYL)ANTHRANILATE ISOMERASE"/>
    <property type="match status" value="1"/>
</dbReference>
<dbReference type="PANTHER" id="PTHR42894:SF1">
    <property type="entry name" value="N-(5'-PHOSPHORIBOSYL)ANTHRANILATE ISOMERASE"/>
    <property type="match status" value="1"/>
</dbReference>
<dbReference type="Pfam" id="PF00697">
    <property type="entry name" value="PRAI"/>
    <property type="match status" value="1"/>
</dbReference>
<dbReference type="SUPFAM" id="SSF51366">
    <property type="entry name" value="Ribulose-phoshate binding barrel"/>
    <property type="match status" value="1"/>
</dbReference>
<organism>
    <name type="scientific">Geotalea uraniireducens (strain Rf4)</name>
    <name type="common">Geobacter uraniireducens</name>
    <dbReference type="NCBI Taxonomy" id="351605"/>
    <lineage>
        <taxon>Bacteria</taxon>
        <taxon>Pseudomonadati</taxon>
        <taxon>Thermodesulfobacteriota</taxon>
        <taxon>Desulfuromonadia</taxon>
        <taxon>Geobacterales</taxon>
        <taxon>Geobacteraceae</taxon>
        <taxon>Geotalea</taxon>
    </lineage>
</organism>
<proteinExistence type="inferred from homology"/>
<accession>A5GES5</accession>
<evidence type="ECO:0000255" key="1">
    <source>
        <dbReference type="HAMAP-Rule" id="MF_00135"/>
    </source>
</evidence>
<sequence>MTKVKICGITTVEDALMAIEAGADALGFVFYDKSPRNIIPERAAEIIGSLPPFIHVVGLFVHAHLDFVNATADRCRLDIVQLHGDESREFCSRVNRRVIKAFRVKDITSLDRMEEYRVAGYLLDAYSPKAFGGTGITFNWDTAVVAKKFGPIILAGGLTPDNVTEAIGHVSPYGVDVSSGVESAPGVKDPAKVREFIKRAKGL</sequence>